<accession>A6WSV2</accession>
<gene>
    <name evidence="1" type="primary">hfq</name>
    <name type="ordered locus">Shew185_3767</name>
</gene>
<name>HFQ_SHEB8</name>
<protein>
    <recommendedName>
        <fullName evidence="1">RNA-binding protein Hfq</fullName>
    </recommendedName>
</protein>
<dbReference type="EMBL" id="CP000753">
    <property type="protein sequence ID" value="ABS09891.1"/>
    <property type="molecule type" value="Genomic_DNA"/>
</dbReference>
<dbReference type="RefSeq" id="WP_006084207.1">
    <property type="nucleotide sequence ID" value="NC_009665.1"/>
</dbReference>
<dbReference type="SMR" id="A6WSV2"/>
<dbReference type="GeneID" id="11773899"/>
<dbReference type="KEGG" id="sbm:Shew185_3767"/>
<dbReference type="HOGENOM" id="CLU_113688_2_2_6"/>
<dbReference type="GO" id="GO:0005829">
    <property type="term" value="C:cytosol"/>
    <property type="evidence" value="ECO:0007669"/>
    <property type="project" value="TreeGrafter"/>
</dbReference>
<dbReference type="GO" id="GO:0003723">
    <property type="term" value="F:RNA binding"/>
    <property type="evidence" value="ECO:0007669"/>
    <property type="project" value="UniProtKB-UniRule"/>
</dbReference>
<dbReference type="GO" id="GO:0006355">
    <property type="term" value="P:regulation of DNA-templated transcription"/>
    <property type="evidence" value="ECO:0007669"/>
    <property type="project" value="InterPro"/>
</dbReference>
<dbReference type="GO" id="GO:0043487">
    <property type="term" value="P:regulation of RNA stability"/>
    <property type="evidence" value="ECO:0007669"/>
    <property type="project" value="TreeGrafter"/>
</dbReference>
<dbReference type="GO" id="GO:0045974">
    <property type="term" value="P:regulation of translation, ncRNA-mediated"/>
    <property type="evidence" value="ECO:0007669"/>
    <property type="project" value="TreeGrafter"/>
</dbReference>
<dbReference type="CDD" id="cd01716">
    <property type="entry name" value="Hfq"/>
    <property type="match status" value="1"/>
</dbReference>
<dbReference type="FunFam" id="2.30.30.100:FF:000001">
    <property type="entry name" value="RNA-binding protein Hfq"/>
    <property type="match status" value="1"/>
</dbReference>
<dbReference type="Gene3D" id="2.30.30.100">
    <property type="match status" value="1"/>
</dbReference>
<dbReference type="HAMAP" id="MF_00436">
    <property type="entry name" value="Hfq"/>
    <property type="match status" value="1"/>
</dbReference>
<dbReference type="InterPro" id="IPR005001">
    <property type="entry name" value="Hfq"/>
</dbReference>
<dbReference type="InterPro" id="IPR010920">
    <property type="entry name" value="LSM_dom_sf"/>
</dbReference>
<dbReference type="InterPro" id="IPR047575">
    <property type="entry name" value="Sm"/>
</dbReference>
<dbReference type="NCBIfam" id="TIGR02383">
    <property type="entry name" value="Hfq"/>
    <property type="match status" value="1"/>
</dbReference>
<dbReference type="NCBIfam" id="NF001602">
    <property type="entry name" value="PRK00395.1"/>
    <property type="match status" value="1"/>
</dbReference>
<dbReference type="PANTHER" id="PTHR34772">
    <property type="entry name" value="RNA-BINDING PROTEIN HFQ"/>
    <property type="match status" value="1"/>
</dbReference>
<dbReference type="PANTHER" id="PTHR34772:SF1">
    <property type="entry name" value="RNA-BINDING PROTEIN HFQ"/>
    <property type="match status" value="1"/>
</dbReference>
<dbReference type="Pfam" id="PF17209">
    <property type="entry name" value="Hfq"/>
    <property type="match status" value="1"/>
</dbReference>
<dbReference type="SUPFAM" id="SSF50182">
    <property type="entry name" value="Sm-like ribonucleoproteins"/>
    <property type="match status" value="1"/>
</dbReference>
<dbReference type="PROSITE" id="PS52002">
    <property type="entry name" value="SM"/>
    <property type="match status" value="1"/>
</dbReference>
<evidence type="ECO:0000255" key="1">
    <source>
        <dbReference type="HAMAP-Rule" id="MF_00436"/>
    </source>
</evidence>
<evidence type="ECO:0000255" key="2">
    <source>
        <dbReference type="PROSITE-ProRule" id="PRU01346"/>
    </source>
</evidence>
<sequence>MAKGQSLQDPFLNALRRERVPVSIYLVNGIKLQGQVESFDQFVILLKNTVSQMVYKHAISTVVPARPFNVTGHQNAQGGYGAQDDAPSGE</sequence>
<proteinExistence type="inferred from homology"/>
<keyword id="KW-0694">RNA-binding</keyword>
<keyword id="KW-0346">Stress response</keyword>
<feature type="chain" id="PRO_1000025934" description="RNA-binding protein Hfq">
    <location>
        <begin position="1"/>
        <end position="90"/>
    </location>
</feature>
<feature type="domain" description="Sm" evidence="2">
    <location>
        <begin position="9"/>
        <end position="68"/>
    </location>
</feature>
<reference key="1">
    <citation type="submission" date="2007-07" db="EMBL/GenBank/DDBJ databases">
        <title>Complete sequence of chromosome of Shewanella baltica OS185.</title>
        <authorList>
            <consortium name="US DOE Joint Genome Institute"/>
            <person name="Copeland A."/>
            <person name="Lucas S."/>
            <person name="Lapidus A."/>
            <person name="Barry K."/>
            <person name="Glavina del Rio T."/>
            <person name="Dalin E."/>
            <person name="Tice H."/>
            <person name="Pitluck S."/>
            <person name="Sims D."/>
            <person name="Brettin T."/>
            <person name="Bruce D."/>
            <person name="Detter J.C."/>
            <person name="Han C."/>
            <person name="Schmutz J."/>
            <person name="Larimer F."/>
            <person name="Land M."/>
            <person name="Hauser L."/>
            <person name="Kyrpides N."/>
            <person name="Mikhailova N."/>
            <person name="Brettar I."/>
            <person name="Rodrigues J."/>
            <person name="Konstantinidis K."/>
            <person name="Tiedje J."/>
            <person name="Richardson P."/>
        </authorList>
    </citation>
    <scope>NUCLEOTIDE SEQUENCE [LARGE SCALE GENOMIC DNA]</scope>
    <source>
        <strain>OS185</strain>
    </source>
</reference>
<comment type="function">
    <text evidence="1">RNA chaperone that binds small regulatory RNA (sRNAs) and mRNAs to facilitate mRNA translational regulation in response to envelope stress, environmental stress and changes in metabolite concentrations. Also binds with high specificity to tRNAs.</text>
</comment>
<comment type="subunit">
    <text evidence="1">Homohexamer.</text>
</comment>
<comment type="similarity">
    <text evidence="1">Belongs to the Hfq family.</text>
</comment>
<organism>
    <name type="scientific">Shewanella baltica (strain OS185)</name>
    <dbReference type="NCBI Taxonomy" id="402882"/>
    <lineage>
        <taxon>Bacteria</taxon>
        <taxon>Pseudomonadati</taxon>
        <taxon>Pseudomonadota</taxon>
        <taxon>Gammaproteobacteria</taxon>
        <taxon>Alteromonadales</taxon>
        <taxon>Shewanellaceae</taxon>
        <taxon>Shewanella</taxon>
    </lineage>
</organism>